<name>COXZ_XANP2</name>
<accession>A7IPB8</accession>
<sequence length="203" mass="21469">MDAGKAERRAGNGRRTDGRRHLVVAAACAAFIAAMVGVTYASVPLYAMFCALTGFGGATRVGAAPTSAPIEREITIRFDANVAPGLPWAFAPVERDVTVKVGATSLAHYTAANRSSMETHANATYNVSPPQAGAYFVKLQCFCFDEQTLAPNEKLEMPVVFYVDPAIAQDPDLKTLTDITLSYTFFPAKTPDKAAARASGTGG</sequence>
<gene>
    <name evidence="1" type="primary">ctaG</name>
    <name type="ordered locus">Xaut_4644</name>
</gene>
<evidence type="ECO:0000255" key="1">
    <source>
        <dbReference type="HAMAP-Rule" id="MF_00155"/>
    </source>
</evidence>
<organism>
    <name type="scientific">Xanthobacter autotrophicus (strain ATCC BAA-1158 / Py2)</name>
    <dbReference type="NCBI Taxonomy" id="78245"/>
    <lineage>
        <taxon>Bacteria</taxon>
        <taxon>Pseudomonadati</taxon>
        <taxon>Pseudomonadota</taxon>
        <taxon>Alphaproteobacteria</taxon>
        <taxon>Hyphomicrobiales</taxon>
        <taxon>Xanthobacteraceae</taxon>
        <taxon>Xanthobacter</taxon>
    </lineage>
</organism>
<proteinExistence type="inferred from homology"/>
<dbReference type="EMBL" id="CP000781">
    <property type="protein sequence ID" value="ABS69864.1"/>
    <property type="molecule type" value="Genomic_DNA"/>
</dbReference>
<dbReference type="SMR" id="A7IPB8"/>
<dbReference type="STRING" id="78245.Xaut_4644"/>
<dbReference type="KEGG" id="xau:Xaut_4644"/>
<dbReference type="eggNOG" id="COG3175">
    <property type="taxonomic scope" value="Bacteria"/>
</dbReference>
<dbReference type="HOGENOM" id="CLU_045000_5_0_5"/>
<dbReference type="OrthoDB" id="9804841at2"/>
<dbReference type="PhylomeDB" id="A7IPB8"/>
<dbReference type="Proteomes" id="UP000002417">
    <property type="component" value="Chromosome"/>
</dbReference>
<dbReference type="GO" id="GO:0005886">
    <property type="term" value="C:plasma membrane"/>
    <property type="evidence" value="ECO:0007669"/>
    <property type="project" value="UniProtKB-SubCell"/>
</dbReference>
<dbReference type="GO" id="GO:0005507">
    <property type="term" value="F:copper ion binding"/>
    <property type="evidence" value="ECO:0007669"/>
    <property type="project" value="InterPro"/>
</dbReference>
<dbReference type="GO" id="GO:0008535">
    <property type="term" value="P:respiratory chain complex IV assembly"/>
    <property type="evidence" value="ECO:0007669"/>
    <property type="project" value="UniProtKB-UniRule"/>
</dbReference>
<dbReference type="FunFam" id="2.60.370.10:FF:000001">
    <property type="entry name" value="COX11 cytochrome c oxidase assembly homolog"/>
    <property type="match status" value="1"/>
</dbReference>
<dbReference type="Gene3D" id="2.60.370.10">
    <property type="entry name" value="Ctag/Cox11"/>
    <property type="match status" value="1"/>
</dbReference>
<dbReference type="HAMAP" id="MF_00155">
    <property type="entry name" value="CtaG"/>
    <property type="match status" value="1"/>
</dbReference>
<dbReference type="InterPro" id="IPR023471">
    <property type="entry name" value="CtaG/Cox11_dom_sf"/>
</dbReference>
<dbReference type="InterPro" id="IPR007533">
    <property type="entry name" value="Cyt_c_oxidase_assmbl_CtaG"/>
</dbReference>
<dbReference type="NCBIfam" id="NF003465">
    <property type="entry name" value="PRK05089.1"/>
    <property type="match status" value="1"/>
</dbReference>
<dbReference type="PANTHER" id="PTHR21320:SF3">
    <property type="entry name" value="CYTOCHROME C OXIDASE ASSEMBLY PROTEIN COX11, MITOCHONDRIAL-RELATED"/>
    <property type="match status" value="1"/>
</dbReference>
<dbReference type="PANTHER" id="PTHR21320">
    <property type="entry name" value="CYTOCHROME C OXIDASE ASSEMBLY PROTEIN COX11-RELATED"/>
    <property type="match status" value="1"/>
</dbReference>
<dbReference type="Pfam" id="PF04442">
    <property type="entry name" value="CtaG_Cox11"/>
    <property type="match status" value="1"/>
</dbReference>
<dbReference type="PIRSF" id="PIRSF005413">
    <property type="entry name" value="COX11"/>
    <property type="match status" value="1"/>
</dbReference>
<dbReference type="SUPFAM" id="SSF110111">
    <property type="entry name" value="Ctag/Cox11"/>
    <property type="match status" value="1"/>
</dbReference>
<comment type="function">
    <text evidence="1">Exerts its effect at some terminal stage of cytochrome c oxidase synthesis, probably by being involved in the insertion of the copper B into subunit I.</text>
</comment>
<comment type="subcellular location">
    <subcellularLocation>
        <location evidence="1">Cell inner membrane</location>
        <topology evidence="1">Single-pass type II membrane protein</topology>
        <orientation evidence="1">Periplasmic side</orientation>
    </subcellularLocation>
</comment>
<comment type="similarity">
    <text evidence="1">Belongs to the COX11/CtaG family.</text>
</comment>
<protein>
    <recommendedName>
        <fullName evidence="1">Cytochrome c oxidase assembly protein CtaG</fullName>
    </recommendedName>
</protein>
<reference key="1">
    <citation type="submission" date="2007-07" db="EMBL/GenBank/DDBJ databases">
        <title>Complete sequence of chromosome of Xanthobacter autotrophicus Py2.</title>
        <authorList>
            <consortium name="US DOE Joint Genome Institute"/>
            <person name="Copeland A."/>
            <person name="Lucas S."/>
            <person name="Lapidus A."/>
            <person name="Barry K."/>
            <person name="Glavina del Rio T."/>
            <person name="Hammon N."/>
            <person name="Israni S."/>
            <person name="Dalin E."/>
            <person name="Tice H."/>
            <person name="Pitluck S."/>
            <person name="Sims D."/>
            <person name="Brettin T."/>
            <person name="Bruce D."/>
            <person name="Detter J.C."/>
            <person name="Han C."/>
            <person name="Tapia R."/>
            <person name="Brainard J."/>
            <person name="Schmutz J."/>
            <person name="Larimer F."/>
            <person name="Land M."/>
            <person name="Hauser L."/>
            <person name="Kyrpides N."/>
            <person name="Kim E."/>
            <person name="Ensigns S.A."/>
            <person name="Richardson P."/>
        </authorList>
    </citation>
    <scope>NUCLEOTIDE SEQUENCE [LARGE SCALE GENOMIC DNA]</scope>
    <source>
        <strain>ATCC BAA-1158 / Py2</strain>
    </source>
</reference>
<keyword id="KW-0997">Cell inner membrane</keyword>
<keyword id="KW-1003">Cell membrane</keyword>
<keyword id="KW-0186">Copper</keyword>
<keyword id="KW-0472">Membrane</keyword>
<keyword id="KW-1185">Reference proteome</keyword>
<keyword id="KW-0735">Signal-anchor</keyword>
<keyword id="KW-0812">Transmembrane</keyword>
<keyword id="KW-1133">Transmembrane helix</keyword>
<feature type="chain" id="PRO_1000096932" description="Cytochrome c oxidase assembly protein CtaG">
    <location>
        <begin position="1"/>
        <end position="203"/>
    </location>
</feature>
<feature type="topological domain" description="Cytoplasmic" evidence="1">
    <location>
        <begin position="1"/>
        <end position="19"/>
    </location>
</feature>
<feature type="transmembrane region" description="Helical; Signal-anchor for type II membrane protein" evidence="1">
    <location>
        <begin position="20"/>
        <end position="42"/>
    </location>
</feature>
<feature type="topological domain" description="Periplasmic" evidence="1">
    <location>
        <begin position="43"/>
        <end position="203"/>
    </location>
</feature>